<comment type="function">
    <text evidence="1">Carrier of the growing fatty acid chain in fatty acid biosynthesis.</text>
</comment>
<comment type="pathway">
    <text evidence="1">Lipid metabolism; fatty acid biosynthesis.</text>
</comment>
<comment type="subcellular location">
    <subcellularLocation>
        <location evidence="1">Cytoplasm</location>
    </subcellularLocation>
</comment>
<comment type="PTM">
    <text evidence="1">4'-phosphopantetheine is transferred from CoA to a specific serine of apo-ACP by AcpS. This modification is essential for activity because fatty acids are bound in thioester linkage to the sulfhydryl of the prosthetic group.</text>
</comment>
<comment type="similarity">
    <text evidence="1">Belongs to the acyl carrier protein (ACP) family.</text>
</comment>
<gene>
    <name evidence="1" type="primary">acpP</name>
    <name type="ordered locus">BCG9842_B1294</name>
</gene>
<protein>
    <recommendedName>
        <fullName evidence="1">Acyl carrier protein</fullName>
        <shortName evidence="1">ACP</shortName>
    </recommendedName>
</protein>
<organism>
    <name type="scientific">Bacillus cereus (strain G9842)</name>
    <dbReference type="NCBI Taxonomy" id="405531"/>
    <lineage>
        <taxon>Bacteria</taxon>
        <taxon>Bacillati</taxon>
        <taxon>Bacillota</taxon>
        <taxon>Bacilli</taxon>
        <taxon>Bacillales</taxon>
        <taxon>Bacillaceae</taxon>
        <taxon>Bacillus</taxon>
        <taxon>Bacillus cereus group</taxon>
    </lineage>
</organism>
<keyword id="KW-0963">Cytoplasm</keyword>
<keyword id="KW-0275">Fatty acid biosynthesis</keyword>
<keyword id="KW-0276">Fatty acid metabolism</keyword>
<keyword id="KW-0444">Lipid biosynthesis</keyword>
<keyword id="KW-0443">Lipid metabolism</keyword>
<keyword id="KW-0596">Phosphopantetheine</keyword>
<keyword id="KW-0597">Phosphoprotein</keyword>
<evidence type="ECO:0000255" key="1">
    <source>
        <dbReference type="HAMAP-Rule" id="MF_01217"/>
    </source>
</evidence>
<evidence type="ECO:0000255" key="2">
    <source>
        <dbReference type="PROSITE-ProRule" id="PRU00258"/>
    </source>
</evidence>
<feature type="chain" id="PRO_1000138999" description="Acyl carrier protein">
    <location>
        <begin position="1"/>
        <end position="77"/>
    </location>
</feature>
<feature type="domain" description="Carrier" evidence="2">
    <location>
        <begin position="2"/>
        <end position="77"/>
    </location>
</feature>
<feature type="modified residue" description="O-(pantetheine 4'-phosphoryl)serine" evidence="2">
    <location>
        <position position="37"/>
    </location>
</feature>
<name>ACP_BACC2</name>
<accession>B7IUK9</accession>
<reference key="1">
    <citation type="submission" date="2008-10" db="EMBL/GenBank/DDBJ databases">
        <title>Genome sequence of Bacillus cereus G9842.</title>
        <authorList>
            <person name="Dodson R.J."/>
            <person name="Durkin A.S."/>
            <person name="Rosovitz M.J."/>
            <person name="Rasko D.A."/>
            <person name="Hoffmaster A."/>
            <person name="Ravel J."/>
            <person name="Sutton G."/>
        </authorList>
    </citation>
    <scope>NUCLEOTIDE SEQUENCE [LARGE SCALE GENOMIC DNA]</scope>
    <source>
        <strain>G9842</strain>
    </source>
</reference>
<proteinExistence type="inferred from homology"/>
<sequence>MADVLERVTKIIVDRLGVEETEVVPAASFKEDLGADSLDVVELVMQLEDEFEMEISDEDAEKIATVGDAVTYIESHL</sequence>
<dbReference type="EMBL" id="CP001186">
    <property type="protein sequence ID" value="ACK95756.1"/>
    <property type="molecule type" value="Genomic_DNA"/>
</dbReference>
<dbReference type="RefSeq" id="WP_000786062.1">
    <property type="nucleotide sequence ID" value="NC_011772.1"/>
</dbReference>
<dbReference type="SMR" id="B7IUK9"/>
<dbReference type="GeneID" id="93007262"/>
<dbReference type="KEGG" id="bcg:BCG9842_B1294"/>
<dbReference type="HOGENOM" id="CLU_108696_5_3_9"/>
<dbReference type="UniPathway" id="UPA00094"/>
<dbReference type="Proteomes" id="UP000006744">
    <property type="component" value="Chromosome"/>
</dbReference>
<dbReference type="GO" id="GO:0005829">
    <property type="term" value="C:cytosol"/>
    <property type="evidence" value="ECO:0007669"/>
    <property type="project" value="TreeGrafter"/>
</dbReference>
<dbReference type="GO" id="GO:0016020">
    <property type="term" value="C:membrane"/>
    <property type="evidence" value="ECO:0007669"/>
    <property type="project" value="GOC"/>
</dbReference>
<dbReference type="GO" id="GO:0000035">
    <property type="term" value="F:acyl binding"/>
    <property type="evidence" value="ECO:0007669"/>
    <property type="project" value="TreeGrafter"/>
</dbReference>
<dbReference type="GO" id="GO:0000036">
    <property type="term" value="F:acyl carrier activity"/>
    <property type="evidence" value="ECO:0007669"/>
    <property type="project" value="UniProtKB-UniRule"/>
</dbReference>
<dbReference type="GO" id="GO:0009245">
    <property type="term" value="P:lipid A biosynthetic process"/>
    <property type="evidence" value="ECO:0007669"/>
    <property type="project" value="TreeGrafter"/>
</dbReference>
<dbReference type="FunFam" id="1.10.1200.10:FF:000001">
    <property type="entry name" value="Acyl carrier protein"/>
    <property type="match status" value="1"/>
</dbReference>
<dbReference type="Gene3D" id="1.10.1200.10">
    <property type="entry name" value="ACP-like"/>
    <property type="match status" value="1"/>
</dbReference>
<dbReference type="HAMAP" id="MF_01217">
    <property type="entry name" value="Acyl_carrier"/>
    <property type="match status" value="1"/>
</dbReference>
<dbReference type="InterPro" id="IPR003231">
    <property type="entry name" value="ACP"/>
</dbReference>
<dbReference type="InterPro" id="IPR036736">
    <property type="entry name" value="ACP-like_sf"/>
</dbReference>
<dbReference type="InterPro" id="IPR009081">
    <property type="entry name" value="PP-bd_ACP"/>
</dbReference>
<dbReference type="InterPro" id="IPR006162">
    <property type="entry name" value="Ppantetheine_attach_site"/>
</dbReference>
<dbReference type="NCBIfam" id="TIGR00517">
    <property type="entry name" value="acyl_carrier"/>
    <property type="match status" value="1"/>
</dbReference>
<dbReference type="NCBIfam" id="NF002148">
    <property type="entry name" value="PRK00982.1-2"/>
    <property type="match status" value="1"/>
</dbReference>
<dbReference type="NCBIfam" id="NF002149">
    <property type="entry name" value="PRK00982.1-3"/>
    <property type="match status" value="1"/>
</dbReference>
<dbReference type="NCBIfam" id="NF002150">
    <property type="entry name" value="PRK00982.1-4"/>
    <property type="match status" value="1"/>
</dbReference>
<dbReference type="NCBIfam" id="NF002151">
    <property type="entry name" value="PRK00982.1-5"/>
    <property type="match status" value="1"/>
</dbReference>
<dbReference type="PANTHER" id="PTHR20863">
    <property type="entry name" value="ACYL CARRIER PROTEIN"/>
    <property type="match status" value="1"/>
</dbReference>
<dbReference type="PANTHER" id="PTHR20863:SF76">
    <property type="entry name" value="CARRIER DOMAIN-CONTAINING PROTEIN"/>
    <property type="match status" value="1"/>
</dbReference>
<dbReference type="Pfam" id="PF00550">
    <property type="entry name" value="PP-binding"/>
    <property type="match status" value="1"/>
</dbReference>
<dbReference type="SUPFAM" id="SSF47336">
    <property type="entry name" value="ACP-like"/>
    <property type="match status" value="1"/>
</dbReference>
<dbReference type="PROSITE" id="PS50075">
    <property type="entry name" value="CARRIER"/>
    <property type="match status" value="1"/>
</dbReference>
<dbReference type="PROSITE" id="PS00012">
    <property type="entry name" value="PHOSPHOPANTETHEINE"/>
    <property type="match status" value="1"/>
</dbReference>